<organism>
    <name type="scientific">Arabidopsis thaliana</name>
    <name type="common">Mouse-ear cress</name>
    <dbReference type="NCBI Taxonomy" id="3702"/>
    <lineage>
        <taxon>Eukaryota</taxon>
        <taxon>Viridiplantae</taxon>
        <taxon>Streptophyta</taxon>
        <taxon>Embryophyta</taxon>
        <taxon>Tracheophyta</taxon>
        <taxon>Spermatophyta</taxon>
        <taxon>Magnoliopsida</taxon>
        <taxon>eudicotyledons</taxon>
        <taxon>Gunneridae</taxon>
        <taxon>Pentapetalae</taxon>
        <taxon>rosids</taxon>
        <taxon>malvids</taxon>
        <taxon>Brassicales</taxon>
        <taxon>Brassicaceae</taxon>
        <taxon>Camelineae</taxon>
        <taxon>Arabidopsis</taxon>
    </lineage>
</organism>
<gene>
    <name type="primary">CYP71B12</name>
    <name type="ordered locus">At5g25130</name>
    <name type="ORF">F21J6.2</name>
</gene>
<keyword id="KW-0349">Heme</keyword>
<keyword id="KW-0408">Iron</keyword>
<keyword id="KW-0472">Membrane</keyword>
<keyword id="KW-0479">Metal-binding</keyword>
<keyword id="KW-0503">Monooxygenase</keyword>
<keyword id="KW-0560">Oxidoreductase</keyword>
<keyword id="KW-1185">Reference proteome</keyword>
<keyword id="KW-0812">Transmembrane</keyword>
<keyword id="KW-1133">Transmembrane helix</keyword>
<evidence type="ECO:0000250" key="1"/>
<evidence type="ECO:0000255" key="2"/>
<evidence type="ECO:0000305" key="3"/>
<reference key="1">
    <citation type="journal article" date="2000" name="Nature">
        <title>Sequence and analysis of chromosome 5 of the plant Arabidopsis thaliana.</title>
        <authorList>
            <person name="Tabata S."/>
            <person name="Kaneko T."/>
            <person name="Nakamura Y."/>
            <person name="Kotani H."/>
            <person name="Kato T."/>
            <person name="Asamizu E."/>
            <person name="Miyajima N."/>
            <person name="Sasamoto S."/>
            <person name="Kimura T."/>
            <person name="Hosouchi T."/>
            <person name="Kawashima K."/>
            <person name="Kohara M."/>
            <person name="Matsumoto M."/>
            <person name="Matsuno A."/>
            <person name="Muraki A."/>
            <person name="Nakayama S."/>
            <person name="Nakazaki N."/>
            <person name="Naruo K."/>
            <person name="Okumura S."/>
            <person name="Shinpo S."/>
            <person name="Takeuchi C."/>
            <person name="Wada T."/>
            <person name="Watanabe A."/>
            <person name="Yamada M."/>
            <person name="Yasuda M."/>
            <person name="Sato S."/>
            <person name="de la Bastide M."/>
            <person name="Huang E."/>
            <person name="Spiegel L."/>
            <person name="Gnoj L."/>
            <person name="O'Shaughnessy A."/>
            <person name="Preston R."/>
            <person name="Habermann K."/>
            <person name="Murray J."/>
            <person name="Johnson D."/>
            <person name="Rohlfing T."/>
            <person name="Nelson J."/>
            <person name="Stoneking T."/>
            <person name="Pepin K."/>
            <person name="Spieth J."/>
            <person name="Sekhon M."/>
            <person name="Armstrong J."/>
            <person name="Becker M."/>
            <person name="Belter E."/>
            <person name="Cordum H."/>
            <person name="Cordes M."/>
            <person name="Courtney L."/>
            <person name="Courtney W."/>
            <person name="Dante M."/>
            <person name="Du H."/>
            <person name="Edwards J."/>
            <person name="Fryman J."/>
            <person name="Haakensen B."/>
            <person name="Lamar E."/>
            <person name="Latreille P."/>
            <person name="Leonard S."/>
            <person name="Meyer R."/>
            <person name="Mulvaney E."/>
            <person name="Ozersky P."/>
            <person name="Riley A."/>
            <person name="Strowmatt C."/>
            <person name="Wagner-McPherson C."/>
            <person name="Wollam A."/>
            <person name="Yoakum M."/>
            <person name="Bell M."/>
            <person name="Dedhia N."/>
            <person name="Parnell L."/>
            <person name="Shah R."/>
            <person name="Rodriguez M."/>
            <person name="Hoon See L."/>
            <person name="Vil D."/>
            <person name="Baker J."/>
            <person name="Kirchoff K."/>
            <person name="Toth K."/>
            <person name="King L."/>
            <person name="Bahret A."/>
            <person name="Miller B."/>
            <person name="Marra M.A."/>
            <person name="Martienssen R."/>
            <person name="McCombie W.R."/>
            <person name="Wilson R.K."/>
            <person name="Murphy G."/>
            <person name="Bancroft I."/>
            <person name="Volckaert G."/>
            <person name="Wambutt R."/>
            <person name="Duesterhoeft A."/>
            <person name="Stiekema W."/>
            <person name="Pohl T."/>
            <person name="Entian K.-D."/>
            <person name="Terryn N."/>
            <person name="Hartley N."/>
            <person name="Bent E."/>
            <person name="Johnson S."/>
            <person name="Langham S.-A."/>
            <person name="McCullagh B."/>
            <person name="Robben J."/>
            <person name="Grymonprez B."/>
            <person name="Zimmermann W."/>
            <person name="Ramsperger U."/>
            <person name="Wedler H."/>
            <person name="Balke K."/>
            <person name="Wedler E."/>
            <person name="Peters S."/>
            <person name="van Staveren M."/>
            <person name="Dirkse W."/>
            <person name="Mooijman P."/>
            <person name="Klein Lankhorst R."/>
            <person name="Weitzenegger T."/>
            <person name="Bothe G."/>
            <person name="Rose M."/>
            <person name="Hauf J."/>
            <person name="Berneiser S."/>
            <person name="Hempel S."/>
            <person name="Feldpausch M."/>
            <person name="Lamberth S."/>
            <person name="Villarroel R."/>
            <person name="Gielen J."/>
            <person name="Ardiles W."/>
            <person name="Bents O."/>
            <person name="Lemcke K."/>
            <person name="Kolesov G."/>
            <person name="Mayer K.F.X."/>
            <person name="Rudd S."/>
            <person name="Schoof H."/>
            <person name="Schueller C."/>
            <person name="Zaccaria P."/>
            <person name="Mewes H.-W."/>
            <person name="Bevan M."/>
            <person name="Fransz P.F."/>
        </authorList>
    </citation>
    <scope>NUCLEOTIDE SEQUENCE [LARGE SCALE GENOMIC DNA]</scope>
    <source>
        <strain>cv. Columbia</strain>
    </source>
</reference>
<reference key="2">
    <citation type="journal article" date="2017" name="Plant J.">
        <title>Araport11: a complete reannotation of the Arabidopsis thaliana reference genome.</title>
        <authorList>
            <person name="Cheng C.Y."/>
            <person name="Krishnakumar V."/>
            <person name="Chan A.P."/>
            <person name="Thibaud-Nissen F."/>
            <person name="Schobel S."/>
            <person name="Town C.D."/>
        </authorList>
    </citation>
    <scope>GENOME REANNOTATION</scope>
    <source>
        <strain>cv. Columbia</strain>
    </source>
</reference>
<reference key="3">
    <citation type="submission" date="2007-04" db="EMBL/GenBank/DDBJ databases">
        <title>Arabidopsis ORF clones.</title>
        <authorList>
            <person name="Bautista-Mercan V.R."/>
            <person name="Kim C.J."/>
            <person name="Chen H."/>
            <person name="Wu S.Y."/>
            <person name="De Los Reyes C."/>
            <person name="Ecker J.R."/>
        </authorList>
    </citation>
    <scope>NUCLEOTIDE SEQUENCE [LARGE SCALE MRNA]</scope>
    <source>
        <strain>cv. Columbia</strain>
    </source>
</reference>
<comment type="cofactor">
    <cofactor evidence="1">
        <name>heme</name>
        <dbReference type="ChEBI" id="CHEBI:30413"/>
    </cofactor>
</comment>
<comment type="subcellular location">
    <subcellularLocation>
        <location evidence="3">Membrane</location>
        <topology evidence="3">Single-pass membrane protein</topology>
    </subcellularLocation>
</comment>
<comment type="similarity">
    <text evidence="3">Belongs to the cytochrome P450 family.</text>
</comment>
<protein>
    <recommendedName>
        <fullName>Cytochrome P450 71B12</fullName>
        <ecNumber>1.14.-.-</ecNumber>
    </recommendedName>
</protein>
<sequence>MSLWYIIVAFVFFSSMIIVRIIRKTKKNLPPGPPRLPIIGNLHQLGSKPHRSMFKLSETYGPLMSLKFGSVSTVVASTPETVKEVLKTFDVECCSRPNMTYPARVTYNLKDLCFSPYSKYWREVRKMTVVELYTAKRVQSFQHTRKEEVAALVDFIKQAASLEKPVNLNKKLMKLSGSVICRVAFGINLQGSKLENTYEEVIQGTVELVGSFAAADYFPVVGRIIDRITGLHSKCEKLFKAMDAFFDQSIKHHLEDEIIKDDIIDLLLKMERGETTLGEFQLTRDHTKGILANILNAGIDTSAQVMTWVMTYLISNPRVLKKAQAEVREVIKHKDDIIEEDIERLQYLKMVIKETFRINPLVPLLIPREASKDVKIGGYNIPKKTWIHVNIWAIHRNPNVWKDPEAFIPERFMDSQIDYKGLNFELLPFGSGRRICPGIGMGMALVHLTLINLLYRFDWKLPEGMKVADVDLEESYGLVCPKKIPLQLIPVLTQWT</sequence>
<proteinExistence type="evidence at transcript level"/>
<name>C71BC_ARATH</name>
<accession>Q9ZU07</accession>
<accession>A4VCM5</accession>
<feature type="chain" id="PRO_0000052090" description="Cytochrome P450 71B12">
    <location>
        <begin position="1"/>
        <end position="496"/>
    </location>
</feature>
<feature type="transmembrane region" description="Helical" evidence="2">
    <location>
        <begin position="2"/>
        <end position="22"/>
    </location>
</feature>
<feature type="binding site" description="axial binding residue" evidence="1">
    <location>
        <position position="436"/>
    </location>
    <ligand>
        <name>heme</name>
        <dbReference type="ChEBI" id="CHEBI:30413"/>
    </ligand>
    <ligandPart>
        <name>Fe</name>
        <dbReference type="ChEBI" id="CHEBI:18248"/>
    </ligandPart>
</feature>
<dbReference type="EC" id="1.14.-.-"/>
<dbReference type="EMBL" id="AC005964">
    <property type="status" value="NOT_ANNOTATED_CDS"/>
    <property type="molecule type" value="Genomic_DNA"/>
</dbReference>
<dbReference type="EMBL" id="AC006259">
    <property type="protein sequence ID" value="AAC98444.1"/>
    <property type="molecule type" value="Genomic_DNA"/>
</dbReference>
<dbReference type="EMBL" id="CP002688">
    <property type="protein sequence ID" value="AED93404.1"/>
    <property type="molecule type" value="Genomic_DNA"/>
</dbReference>
<dbReference type="EMBL" id="BT030466">
    <property type="protein sequence ID" value="ABP88120.1"/>
    <property type="molecule type" value="mRNA"/>
</dbReference>
<dbReference type="RefSeq" id="NP_197895.1">
    <property type="nucleotide sequence ID" value="NM_122422.4"/>
</dbReference>
<dbReference type="SMR" id="Q9ZU07"/>
<dbReference type="FunCoup" id="Q9ZU07">
    <property type="interactions" value="507"/>
</dbReference>
<dbReference type="STRING" id="3702.Q9ZU07"/>
<dbReference type="PaxDb" id="3702-AT5G25130.1"/>
<dbReference type="ProteomicsDB" id="239135"/>
<dbReference type="EnsemblPlants" id="AT5G25130.1">
    <property type="protein sequence ID" value="AT5G25130.1"/>
    <property type="gene ID" value="AT5G25130"/>
</dbReference>
<dbReference type="GeneID" id="832584"/>
<dbReference type="Gramene" id="AT5G25130.1">
    <property type="protein sequence ID" value="AT5G25130.1"/>
    <property type="gene ID" value="AT5G25130"/>
</dbReference>
<dbReference type="KEGG" id="ath:AT5G25130"/>
<dbReference type="Araport" id="AT5G25130"/>
<dbReference type="TAIR" id="AT5G25130">
    <property type="gene designation" value="CYP71B12"/>
</dbReference>
<dbReference type="eggNOG" id="KOG0156">
    <property type="taxonomic scope" value="Eukaryota"/>
</dbReference>
<dbReference type="HOGENOM" id="CLU_001570_4_1_1"/>
<dbReference type="InParanoid" id="Q9ZU07"/>
<dbReference type="OMA" id="FNGRAFN"/>
<dbReference type="PhylomeDB" id="Q9ZU07"/>
<dbReference type="BioCyc" id="ARA:AT5G25130-MONOMER"/>
<dbReference type="PRO" id="PR:Q9ZU07"/>
<dbReference type="Proteomes" id="UP000006548">
    <property type="component" value="Chromosome 5"/>
</dbReference>
<dbReference type="ExpressionAtlas" id="Q9ZU07">
    <property type="expression patterns" value="baseline and differential"/>
</dbReference>
<dbReference type="GO" id="GO:0016020">
    <property type="term" value="C:membrane"/>
    <property type="evidence" value="ECO:0007669"/>
    <property type="project" value="UniProtKB-SubCell"/>
</dbReference>
<dbReference type="GO" id="GO:0009536">
    <property type="term" value="C:plastid"/>
    <property type="evidence" value="ECO:0007005"/>
    <property type="project" value="TAIR"/>
</dbReference>
<dbReference type="GO" id="GO:0020037">
    <property type="term" value="F:heme binding"/>
    <property type="evidence" value="ECO:0007669"/>
    <property type="project" value="InterPro"/>
</dbReference>
<dbReference type="GO" id="GO:0005506">
    <property type="term" value="F:iron ion binding"/>
    <property type="evidence" value="ECO:0007669"/>
    <property type="project" value="InterPro"/>
</dbReference>
<dbReference type="GO" id="GO:0004497">
    <property type="term" value="F:monooxygenase activity"/>
    <property type="evidence" value="ECO:0007669"/>
    <property type="project" value="UniProtKB-KW"/>
</dbReference>
<dbReference type="GO" id="GO:0016705">
    <property type="term" value="F:oxidoreductase activity, acting on paired donors, with incorporation or reduction of molecular oxygen"/>
    <property type="evidence" value="ECO:0007669"/>
    <property type="project" value="InterPro"/>
</dbReference>
<dbReference type="CDD" id="cd11072">
    <property type="entry name" value="CYP71-like"/>
    <property type="match status" value="1"/>
</dbReference>
<dbReference type="FunFam" id="1.10.630.10:FF:000043">
    <property type="entry name" value="Cytochrome P450 99A2"/>
    <property type="match status" value="1"/>
</dbReference>
<dbReference type="Gene3D" id="1.10.630.10">
    <property type="entry name" value="Cytochrome P450"/>
    <property type="match status" value="1"/>
</dbReference>
<dbReference type="InterPro" id="IPR001128">
    <property type="entry name" value="Cyt_P450"/>
</dbReference>
<dbReference type="InterPro" id="IPR017972">
    <property type="entry name" value="Cyt_P450_CS"/>
</dbReference>
<dbReference type="InterPro" id="IPR002401">
    <property type="entry name" value="Cyt_P450_E_grp-I"/>
</dbReference>
<dbReference type="InterPro" id="IPR036396">
    <property type="entry name" value="Cyt_P450_sf"/>
</dbReference>
<dbReference type="PANTHER" id="PTHR47955:SF19">
    <property type="entry name" value="CYTOCHROME P450 71A9-LIKE ISOFORM X1"/>
    <property type="match status" value="1"/>
</dbReference>
<dbReference type="PANTHER" id="PTHR47955">
    <property type="entry name" value="CYTOCHROME P450 FAMILY 71 PROTEIN"/>
    <property type="match status" value="1"/>
</dbReference>
<dbReference type="Pfam" id="PF00067">
    <property type="entry name" value="p450"/>
    <property type="match status" value="1"/>
</dbReference>
<dbReference type="PRINTS" id="PR00463">
    <property type="entry name" value="EP450I"/>
</dbReference>
<dbReference type="PRINTS" id="PR00385">
    <property type="entry name" value="P450"/>
</dbReference>
<dbReference type="SUPFAM" id="SSF48264">
    <property type="entry name" value="Cytochrome P450"/>
    <property type="match status" value="1"/>
</dbReference>
<dbReference type="PROSITE" id="PS00086">
    <property type="entry name" value="CYTOCHROME_P450"/>
    <property type="match status" value="1"/>
</dbReference>